<name>GSP2_YEAST</name>
<dbReference type="EMBL" id="L08691">
    <property type="protein sequence ID" value="AAA34654.1"/>
    <property type="molecule type" value="Genomic_DNA"/>
</dbReference>
<dbReference type="EMBL" id="X71946">
    <property type="protein sequence ID" value="CAA50748.1"/>
    <property type="molecule type" value="Genomic_DNA"/>
</dbReference>
<dbReference type="EMBL" id="Z75093">
    <property type="protein sequence ID" value="CAA99394.1"/>
    <property type="molecule type" value="Genomic_DNA"/>
</dbReference>
<dbReference type="EMBL" id="AY693117">
    <property type="protein sequence ID" value="AAT93136.1"/>
    <property type="molecule type" value="Genomic_DNA"/>
</dbReference>
<dbReference type="EMBL" id="BK006948">
    <property type="protein sequence ID" value="DAA10957.1"/>
    <property type="molecule type" value="Genomic_DNA"/>
</dbReference>
<dbReference type="PIR" id="S35505">
    <property type="entry name" value="S35505"/>
</dbReference>
<dbReference type="RefSeq" id="NP_014828.1">
    <property type="nucleotide sequence ID" value="NM_001183604.1"/>
</dbReference>
<dbReference type="SMR" id="P32836"/>
<dbReference type="BioGRID" id="34580">
    <property type="interactions" value="114"/>
</dbReference>
<dbReference type="DIP" id="DIP-1357N"/>
<dbReference type="FunCoup" id="P32836">
    <property type="interactions" value="1648"/>
</dbReference>
<dbReference type="IntAct" id="P32836">
    <property type="interactions" value="17"/>
</dbReference>
<dbReference type="MINT" id="P32836"/>
<dbReference type="STRING" id="4932.YOR185C"/>
<dbReference type="BindingDB" id="P32836"/>
<dbReference type="iPTMnet" id="P32836"/>
<dbReference type="PaxDb" id="4932-YOR185C"/>
<dbReference type="PeptideAtlas" id="P32836"/>
<dbReference type="EnsemblFungi" id="YOR185C_mRNA">
    <property type="protein sequence ID" value="YOR185C"/>
    <property type="gene ID" value="YOR185C"/>
</dbReference>
<dbReference type="GeneID" id="854357"/>
<dbReference type="KEGG" id="sce:YOR185C"/>
<dbReference type="AGR" id="SGD:S000005711"/>
<dbReference type="SGD" id="S000005711">
    <property type="gene designation" value="GSP2"/>
</dbReference>
<dbReference type="VEuPathDB" id="FungiDB:YOR185C"/>
<dbReference type="eggNOG" id="KOG0096">
    <property type="taxonomic scope" value="Eukaryota"/>
</dbReference>
<dbReference type="GeneTree" id="ENSGT00940000153786"/>
<dbReference type="HOGENOM" id="CLU_041217_13_0_1"/>
<dbReference type="InParanoid" id="P32836"/>
<dbReference type="OMA" id="FNAWDTA"/>
<dbReference type="OrthoDB" id="48625at2759"/>
<dbReference type="BioCyc" id="YEAST:G3O-33695-MONOMER"/>
<dbReference type="BioGRID-ORCS" id="854357">
    <property type="hits" value="0 hits in 10 CRISPR screens"/>
</dbReference>
<dbReference type="PRO" id="PR:P32836"/>
<dbReference type="Proteomes" id="UP000002311">
    <property type="component" value="Chromosome XV"/>
</dbReference>
<dbReference type="RNAct" id="P32836">
    <property type="molecule type" value="protein"/>
</dbReference>
<dbReference type="GO" id="GO:0005737">
    <property type="term" value="C:cytoplasm"/>
    <property type="evidence" value="ECO:0000247"/>
    <property type="project" value="SGD"/>
</dbReference>
<dbReference type="GO" id="GO:0005634">
    <property type="term" value="C:nucleus"/>
    <property type="evidence" value="ECO:0007005"/>
    <property type="project" value="SGD"/>
</dbReference>
<dbReference type="GO" id="GO:0005525">
    <property type="term" value="F:GTP binding"/>
    <property type="evidence" value="ECO:0007669"/>
    <property type="project" value="UniProtKB-KW"/>
</dbReference>
<dbReference type="GO" id="GO:0003924">
    <property type="term" value="F:GTPase activity"/>
    <property type="evidence" value="ECO:0000247"/>
    <property type="project" value="SGD"/>
</dbReference>
<dbReference type="GO" id="GO:0006997">
    <property type="term" value="P:nucleus organization"/>
    <property type="evidence" value="ECO:0000316"/>
    <property type="project" value="SGD"/>
</dbReference>
<dbReference type="GO" id="GO:0016973">
    <property type="term" value="P:poly(A)+ mRNA export from nucleus"/>
    <property type="evidence" value="ECO:0000247"/>
    <property type="project" value="SGD"/>
</dbReference>
<dbReference type="GO" id="GO:0006606">
    <property type="term" value="P:protein import into nucleus"/>
    <property type="evidence" value="ECO:0000247"/>
    <property type="project" value="SGD"/>
</dbReference>
<dbReference type="GO" id="GO:0000054">
    <property type="term" value="P:ribosomal subunit export from nucleus"/>
    <property type="evidence" value="ECO:0000318"/>
    <property type="project" value="GO_Central"/>
</dbReference>
<dbReference type="CDD" id="cd00877">
    <property type="entry name" value="Ran"/>
    <property type="match status" value="1"/>
</dbReference>
<dbReference type="FunFam" id="3.40.50.300:FF:000131">
    <property type="entry name" value="GTP-binding nuclear protein Ran"/>
    <property type="match status" value="1"/>
</dbReference>
<dbReference type="Gene3D" id="3.40.50.300">
    <property type="entry name" value="P-loop containing nucleotide triphosphate hydrolases"/>
    <property type="match status" value="1"/>
</dbReference>
<dbReference type="InterPro" id="IPR027417">
    <property type="entry name" value="P-loop_NTPase"/>
</dbReference>
<dbReference type="InterPro" id="IPR002041">
    <property type="entry name" value="Ran_GTPase"/>
</dbReference>
<dbReference type="InterPro" id="IPR005225">
    <property type="entry name" value="Small_GTP-bd"/>
</dbReference>
<dbReference type="InterPro" id="IPR001806">
    <property type="entry name" value="Small_GTPase"/>
</dbReference>
<dbReference type="NCBIfam" id="TIGR00231">
    <property type="entry name" value="small_GTP"/>
    <property type="match status" value="1"/>
</dbReference>
<dbReference type="PANTHER" id="PTHR24071:SF0">
    <property type="entry name" value="GTP-BINDING NUCLEAR PROTEIN RAN"/>
    <property type="match status" value="1"/>
</dbReference>
<dbReference type="PANTHER" id="PTHR24071">
    <property type="entry name" value="RAN GTPASE"/>
    <property type="match status" value="1"/>
</dbReference>
<dbReference type="Pfam" id="PF00071">
    <property type="entry name" value="Ras"/>
    <property type="match status" value="1"/>
</dbReference>
<dbReference type="PRINTS" id="PR00627">
    <property type="entry name" value="GTPRANTC4"/>
</dbReference>
<dbReference type="SMART" id="SM00175">
    <property type="entry name" value="RAB"/>
    <property type="match status" value="1"/>
</dbReference>
<dbReference type="SMART" id="SM00176">
    <property type="entry name" value="RAN"/>
    <property type="match status" value="1"/>
</dbReference>
<dbReference type="SMART" id="SM00173">
    <property type="entry name" value="RAS"/>
    <property type="match status" value="1"/>
</dbReference>
<dbReference type="SMART" id="SM00174">
    <property type="entry name" value="RHO"/>
    <property type="match status" value="1"/>
</dbReference>
<dbReference type="SUPFAM" id="SSF52540">
    <property type="entry name" value="P-loop containing nucleoside triphosphate hydrolases"/>
    <property type="match status" value="1"/>
</dbReference>
<dbReference type="PROSITE" id="PS51418">
    <property type="entry name" value="RAN"/>
    <property type="match status" value="1"/>
</dbReference>
<accession>P32836</accession>
<accession>D6W2P1</accession>
<feature type="initiator methionine" description="Removed" evidence="1">
    <location>
        <position position="1"/>
    </location>
</feature>
<feature type="chain" id="PRO_0000208734" description="GTP-binding nuclear protein GSP2/CNR2">
    <location>
        <begin position="2"/>
        <end position="220"/>
    </location>
</feature>
<feature type="domain" description="Small GTPase Ran-type" evidence="3">
    <location>
        <begin position="10"/>
        <end position="174"/>
    </location>
</feature>
<feature type="region of interest" description="Switch-I" evidence="3">
    <location>
        <begin position="40"/>
        <end position="48"/>
    </location>
</feature>
<feature type="region of interest" description="Switch-II" evidence="3">
    <location>
        <begin position="71"/>
        <end position="87"/>
    </location>
</feature>
<feature type="binding site" evidence="2">
    <location>
        <begin position="21"/>
        <end position="28"/>
    </location>
    <ligand>
        <name>GTP</name>
        <dbReference type="ChEBI" id="CHEBI:37565"/>
    </ligand>
</feature>
<feature type="binding site" evidence="2">
    <location>
        <position position="71"/>
    </location>
    <ligand>
        <name>GTP</name>
        <dbReference type="ChEBI" id="CHEBI:37565"/>
    </ligand>
</feature>
<feature type="binding site" evidence="2">
    <location>
        <begin position="125"/>
        <end position="128"/>
    </location>
    <ligand>
        <name>GTP</name>
        <dbReference type="ChEBI" id="CHEBI:37565"/>
    </ligand>
</feature>
<feature type="binding site" evidence="2">
    <location>
        <begin position="153"/>
        <end position="155"/>
    </location>
    <ligand>
        <name>GTP</name>
        <dbReference type="ChEBI" id="CHEBI:37565"/>
    </ligand>
</feature>
<feature type="modified residue" description="N-acetylserine" evidence="1">
    <location>
        <position position="2"/>
    </location>
</feature>
<feature type="modified residue" description="Phosphoserine" evidence="1">
    <location>
        <position position="2"/>
    </location>
</feature>
<protein>
    <recommendedName>
        <fullName>GTP-binding nuclear protein GSP2/CNR2</fullName>
    </recommendedName>
</protein>
<sequence>MSAPAQNNAEVPTFKLVLVGDGGTGKTTFVKRHLTGEFEKKYIATIGVEVHPLSFYTNFGEIKFDVWDTAGQEKFGGLRDGYYINAQCAIIMFDVTSRITYKNVPNWHRDLVRVCENIPIVLCGNKVDVKERKVKAKTITFHRKKNLQYYDISAKSNYNFEKPFLWLARKLAGNPQLEFVASPALAPPEVQVDEQLMHQYQQEMDQATALPLPDEDDADL</sequence>
<comment type="function">
    <text>GTP-binding protein involved in nucleocytoplasmic transport. Required for the import of protein into the nucleus and also for RNA export. Not essential for cell viability.</text>
</comment>
<comment type="subunit">
    <text evidence="2">Found in a nuclear export complex with RanGTP, exportin and pre-miRNA (By similarity).</text>
</comment>
<comment type="interaction">
    <interactant intactId="EBI-7934">
        <id>P32836</id>
    </interactant>
    <interactant intactId="EBI-11145">
        <id>P47123</id>
        <label>MOG1</label>
    </interactant>
    <organismsDiffer>false</organismsDiffer>
    <experiments>4</experiments>
</comment>
<comment type="subcellular location">
    <subcellularLocation>
        <location>Nucleus</location>
    </subcellularLocation>
</comment>
<comment type="induction">
    <text>GSP2 expression exhibits carbon source dependency.</text>
</comment>
<comment type="miscellaneous">
    <text evidence="4">Present with 2460 molecules/cell in log phase SD medium.</text>
</comment>
<comment type="similarity">
    <text evidence="3 5">Belongs to the small GTPase superfamily. Ran family.</text>
</comment>
<organism>
    <name type="scientific">Saccharomyces cerevisiae (strain ATCC 204508 / S288c)</name>
    <name type="common">Baker's yeast</name>
    <dbReference type="NCBI Taxonomy" id="559292"/>
    <lineage>
        <taxon>Eukaryota</taxon>
        <taxon>Fungi</taxon>
        <taxon>Dikarya</taxon>
        <taxon>Ascomycota</taxon>
        <taxon>Saccharomycotina</taxon>
        <taxon>Saccharomycetes</taxon>
        <taxon>Saccharomycetales</taxon>
        <taxon>Saccharomycetaceae</taxon>
        <taxon>Saccharomyces</taxon>
    </lineage>
</organism>
<reference key="1">
    <citation type="journal article" date="1993" name="Mol. Cell. Biol.">
        <title>GSP1 and GSP2, genetic suppressors of the prp20-1 mutant in Saccharomyces cerevisiae: GTP-binding proteins involved in the maintenance of nuclear organization.</title>
        <authorList>
            <person name="Belhumeur P."/>
            <person name="Lee A."/>
            <person name="Tam R."/>
            <person name="Dipaolo T."/>
            <person name="Fortin N."/>
            <person name="Clark M.W."/>
        </authorList>
    </citation>
    <scope>NUCLEOTIDE SEQUENCE [GENOMIC DNA]</scope>
</reference>
<reference key="2">
    <citation type="journal article" date="1993" name="EMBO J.">
        <title>Regulation of RNA processing and transport by a nuclear guanine nucleotide release protein and members of the Ras superfamily.</title>
        <authorList>
            <person name="Kadowaki T."/>
            <person name="Goldfarb D."/>
            <person name="Spitz L.M."/>
            <person name="Tartakoff A.M."/>
            <person name="Ohno M."/>
        </authorList>
    </citation>
    <scope>NUCLEOTIDE SEQUENCE [GENOMIC DNA]</scope>
</reference>
<reference key="3">
    <citation type="journal article" date="1997" name="Nature">
        <title>The nucleotide sequence of Saccharomyces cerevisiae chromosome XV.</title>
        <authorList>
            <person name="Dujon B."/>
            <person name="Albermann K."/>
            <person name="Aldea M."/>
            <person name="Alexandraki D."/>
            <person name="Ansorge W."/>
            <person name="Arino J."/>
            <person name="Benes V."/>
            <person name="Bohn C."/>
            <person name="Bolotin-Fukuhara M."/>
            <person name="Bordonne R."/>
            <person name="Boyer J."/>
            <person name="Camasses A."/>
            <person name="Casamayor A."/>
            <person name="Casas C."/>
            <person name="Cheret G."/>
            <person name="Cziepluch C."/>
            <person name="Daignan-Fornier B."/>
            <person name="Dang V.-D."/>
            <person name="de Haan M."/>
            <person name="Delius H."/>
            <person name="Durand P."/>
            <person name="Fairhead C."/>
            <person name="Feldmann H."/>
            <person name="Gaillon L."/>
            <person name="Galisson F."/>
            <person name="Gamo F.-J."/>
            <person name="Gancedo C."/>
            <person name="Goffeau A."/>
            <person name="Goulding S.E."/>
            <person name="Grivell L.A."/>
            <person name="Habbig B."/>
            <person name="Hand N.J."/>
            <person name="Hani J."/>
            <person name="Hattenhorst U."/>
            <person name="Hebling U."/>
            <person name="Hernando Y."/>
            <person name="Herrero E."/>
            <person name="Heumann K."/>
            <person name="Hiesel R."/>
            <person name="Hilger F."/>
            <person name="Hofmann B."/>
            <person name="Hollenberg C.P."/>
            <person name="Hughes B."/>
            <person name="Jauniaux J.-C."/>
            <person name="Kalogeropoulos A."/>
            <person name="Katsoulou C."/>
            <person name="Kordes E."/>
            <person name="Lafuente M.J."/>
            <person name="Landt O."/>
            <person name="Louis E.J."/>
            <person name="Maarse A.C."/>
            <person name="Madania A."/>
            <person name="Mannhaupt G."/>
            <person name="Marck C."/>
            <person name="Martin R.P."/>
            <person name="Mewes H.-W."/>
            <person name="Michaux G."/>
            <person name="Paces V."/>
            <person name="Parle-McDermott A.G."/>
            <person name="Pearson B.M."/>
            <person name="Perrin A."/>
            <person name="Pettersson B."/>
            <person name="Poch O."/>
            <person name="Pohl T.M."/>
            <person name="Poirey R."/>
            <person name="Portetelle D."/>
            <person name="Pujol A."/>
            <person name="Purnelle B."/>
            <person name="Ramezani Rad M."/>
            <person name="Rechmann S."/>
            <person name="Schwager C."/>
            <person name="Schweizer M."/>
            <person name="Sor F."/>
            <person name="Sterky F."/>
            <person name="Tarassov I.A."/>
            <person name="Teodoru C."/>
            <person name="Tettelin H."/>
            <person name="Thierry A."/>
            <person name="Tobiasch E."/>
            <person name="Tzermia M."/>
            <person name="Uhlen M."/>
            <person name="Unseld M."/>
            <person name="Valens M."/>
            <person name="Vandenbol M."/>
            <person name="Vetter I."/>
            <person name="Vlcek C."/>
            <person name="Voet M."/>
            <person name="Volckaert G."/>
            <person name="Voss H."/>
            <person name="Wambutt R."/>
            <person name="Wedler H."/>
            <person name="Wiemann S."/>
            <person name="Winsor B."/>
            <person name="Wolfe K.H."/>
            <person name="Zollner A."/>
            <person name="Zumstein E."/>
            <person name="Kleine K."/>
        </authorList>
    </citation>
    <scope>NUCLEOTIDE SEQUENCE [LARGE SCALE GENOMIC DNA]</scope>
    <source>
        <strain>ATCC 204508 / S288c</strain>
    </source>
</reference>
<reference key="4">
    <citation type="journal article" date="2014" name="G3 (Bethesda)">
        <title>The reference genome sequence of Saccharomyces cerevisiae: Then and now.</title>
        <authorList>
            <person name="Engel S.R."/>
            <person name="Dietrich F.S."/>
            <person name="Fisk D.G."/>
            <person name="Binkley G."/>
            <person name="Balakrishnan R."/>
            <person name="Costanzo M.C."/>
            <person name="Dwight S.S."/>
            <person name="Hitz B.C."/>
            <person name="Karra K."/>
            <person name="Nash R.S."/>
            <person name="Weng S."/>
            <person name="Wong E.D."/>
            <person name="Lloyd P."/>
            <person name="Skrzypek M.S."/>
            <person name="Miyasato S.R."/>
            <person name="Simison M."/>
            <person name="Cherry J.M."/>
        </authorList>
    </citation>
    <scope>GENOME REANNOTATION</scope>
    <source>
        <strain>ATCC 204508 / S288c</strain>
    </source>
</reference>
<reference key="5">
    <citation type="journal article" date="2007" name="Genome Res.">
        <title>Approaching a complete repository of sequence-verified protein-encoding clones for Saccharomyces cerevisiae.</title>
        <authorList>
            <person name="Hu Y."/>
            <person name="Rolfs A."/>
            <person name="Bhullar B."/>
            <person name="Murthy T.V.S."/>
            <person name="Zhu C."/>
            <person name="Berger M.F."/>
            <person name="Camargo A.A."/>
            <person name="Kelley F."/>
            <person name="McCarron S."/>
            <person name="Jepson D."/>
            <person name="Richardson A."/>
            <person name="Raphael J."/>
            <person name="Moreira D."/>
            <person name="Taycher E."/>
            <person name="Zuo D."/>
            <person name="Mohr S."/>
            <person name="Kane M.F."/>
            <person name="Williamson J."/>
            <person name="Simpson A.J.G."/>
            <person name="Bulyk M.L."/>
            <person name="Harlow E."/>
            <person name="Marsischky G."/>
            <person name="Kolodner R.D."/>
            <person name="LaBaer J."/>
        </authorList>
    </citation>
    <scope>NUCLEOTIDE SEQUENCE [GENOMIC DNA]</scope>
    <source>
        <strain>ATCC 204508 / S288c</strain>
    </source>
</reference>
<reference key="6">
    <citation type="journal article" date="2003" name="Nature">
        <title>Global analysis of protein expression in yeast.</title>
        <authorList>
            <person name="Ghaemmaghami S."/>
            <person name="Huh W.-K."/>
            <person name="Bower K."/>
            <person name="Howson R.W."/>
            <person name="Belle A."/>
            <person name="Dephoure N."/>
            <person name="O'Shea E.K."/>
            <person name="Weissman J.S."/>
        </authorList>
    </citation>
    <scope>LEVEL OF PROTEIN EXPRESSION [LARGE SCALE ANALYSIS]</scope>
</reference>
<gene>
    <name type="primary">GSP2</name>
    <name type="synonym">CNR2</name>
    <name type="ordered locus">YOR185C</name>
</gene>
<evidence type="ECO:0000250" key="1">
    <source>
        <dbReference type="UniProtKB" id="P32835"/>
    </source>
</evidence>
<evidence type="ECO:0000250" key="2">
    <source>
        <dbReference type="UniProtKB" id="P62825"/>
    </source>
</evidence>
<evidence type="ECO:0000255" key="3">
    <source>
        <dbReference type="PROSITE-ProRule" id="PRU00752"/>
    </source>
</evidence>
<evidence type="ECO:0000269" key="4">
    <source>
    </source>
</evidence>
<evidence type="ECO:0000305" key="5"/>
<proteinExistence type="evidence at protein level"/>
<keyword id="KW-0007">Acetylation</keyword>
<keyword id="KW-0342">GTP-binding</keyword>
<keyword id="KW-0547">Nucleotide-binding</keyword>
<keyword id="KW-0539">Nucleus</keyword>
<keyword id="KW-0597">Phosphoprotein</keyword>
<keyword id="KW-0653">Protein transport</keyword>
<keyword id="KW-1185">Reference proteome</keyword>
<keyword id="KW-0813">Transport</keyword>